<comment type="function">
    <text evidence="1">Integral membrane transporter that imports quinic acid to be catabolized as a carbon source.</text>
</comment>
<comment type="subunit">
    <text evidence="1">Interacts with creB.</text>
</comment>
<comment type="subcellular location">
    <subcellularLocation>
        <location>Cell membrane</location>
        <topology>Multi-pass membrane protein</topology>
    </subcellularLocation>
    <subcellularLocation>
        <location evidence="4">Cell membrane</location>
    </subcellularLocation>
</comment>
<comment type="PTM">
    <text>Ubiquitinated. Deubiquitinated by creB, probably to control its activity or amount.</text>
</comment>
<comment type="similarity">
    <text evidence="4">Belongs to the major facilitator superfamily. Sugar transporter (TC 2.A.1.1) family.</text>
</comment>
<name>QUTD_ASPFU</name>
<dbReference type="EMBL" id="BX649605">
    <property type="protein sequence ID" value="CAE47883.1"/>
    <property type="molecule type" value="Genomic_DNA"/>
</dbReference>
<dbReference type="EMBL" id="AAHF01000004">
    <property type="protein sequence ID" value="EAL90486.1"/>
    <property type="molecule type" value="Genomic_DNA"/>
</dbReference>
<dbReference type="RefSeq" id="XP_752524.1">
    <property type="nucleotide sequence ID" value="XM_747431.1"/>
</dbReference>
<dbReference type="SMR" id="Q6MYX6"/>
<dbReference type="STRING" id="330879.Q6MYX6"/>
<dbReference type="EnsemblFungi" id="EAL90486">
    <property type="protein sequence ID" value="EAL90486"/>
    <property type="gene ID" value="AFUA_1G11580"/>
</dbReference>
<dbReference type="GeneID" id="3510326"/>
<dbReference type="KEGG" id="afm:AFUA_1G11580"/>
<dbReference type="VEuPathDB" id="FungiDB:Afu1g11580"/>
<dbReference type="eggNOG" id="KOG0254">
    <property type="taxonomic scope" value="Eukaryota"/>
</dbReference>
<dbReference type="HOGENOM" id="CLU_001265_30_12_1"/>
<dbReference type="InParanoid" id="Q6MYX6"/>
<dbReference type="OMA" id="PADHIYM"/>
<dbReference type="OrthoDB" id="508119at2759"/>
<dbReference type="Proteomes" id="UP000002530">
    <property type="component" value="Chromosome 1"/>
</dbReference>
<dbReference type="GO" id="GO:0016020">
    <property type="term" value="C:membrane"/>
    <property type="evidence" value="ECO:0000318"/>
    <property type="project" value="GO_Central"/>
</dbReference>
<dbReference type="GO" id="GO:0005886">
    <property type="term" value="C:plasma membrane"/>
    <property type="evidence" value="ECO:0007669"/>
    <property type="project" value="UniProtKB-SubCell"/>
</dbReference>
<dbReference type="GO" id="GO:0005351">
    <property type="term" value="F:carbohydrate:proton symporter activity"/>
    <property type="evidence" value="ECO:0000318"/>
    <property type="project" value="GO_Central"/>
</dbReference>
<dbReference type="GO" id="GO:0008643">
    <property type="term" value="P:carbohydrate transport"/>
    <property type="evidence" value="ECO:0000318"/>
    <property type="project" value="GO_Central"/>
</dbReference>
<dbReference type="GO" id="GO:0019630">
    <property type="term" value="P:quinate metabolic process"/>
    <property type="evidence" value="ECO:0007669"/>
    <property type="project" value="UniProtKB-KW"/>
</dbReference>
<dbReference type="FunFam" id="1.20.1250.20:FF:000026">
    <property type="entry name" value="MFS quinate transporter QutD"/>
    <property type="match status" value="1"/>
</dbReference>
<dbReference type="Gene3D" id="1.20.1250.20">
    <property type="entry name" value="MFS general substrate transporter like domains"/>
    <property type="match status" value="1"/>
</dbReference>
<dbReference type="InterPro" id="IPR020846">
    <property type="entry name" value="MFS_dom"/>
</dbReference>
<dbReference type="InterPro" id="IPR005828">
    <property type="entry name" value="MFS_sugar_transport-like"/>
</dbReference>
<dbReference type="InterPro" id="IPR050360">
    <property type="entry name" value="MFS_Sugar_Transporters"/>
</dbReference>
<dbReference type="InterPro" id="IPR036259">
    <property type="entry name" value="MFS_trans_sf"/>
</dbReference>
<dbReference type="InterPro" id="IPR003663">
    <property type="entry name" value="Sugar/inositol_transpt"/>
</dbReference>
<dbReference type="InterPro" id="IPR005829">
    <property type="entry name" value="Sugar_transporter_CS"/>
</dbReference>
<dbReference type="NCBIfam" id="TIGR00879">
    <property type="entry name" value="SP"/>
    <property type="match status" value="1"/>
</dbReference>
<dbReference type="PANTHER" id="PTHR48022:SF34">
    <property type="entry name" value="MAJOR FACILITATOR SUPERFAMILY (MFS) PROFILE DOMAIN-CONTAINING PROTEIN-RELATED"/>
    <property type="match status" value="1"/>
</dbReference>
<dbReference type="PANTHER" id="PTHR48022">
    <property type="entry name" value="PLASTIDIC GLUCOSE TRANSPORTER 4"/>
    <property type="match status" value="1"/>
</dbReference>
<dbReference type="Pfam" id="PF00083">
    <property type="entry name" value="Sugar_tr"/>
    <property type="match status" value="1"/>
</dbReference>
<dbReference type="PRINTS" id="PR00171">
    <property type="entry name" value="SUGRTRNSPORT"/>
</dbReference>
<dbReference type="SUPFAM" id="SSF103473">
    <property type="entry name" value="MFS general substrate transporter"/>
    <property type="match status" value="1"/>
</dbReference>
<dbReference type="PROSITE" id="PS50850">
    <property type="entry name" value="MFS"/>
    <property type="match status" value="1"/>
</dbReference>
<dbReference type="PROSITE" id="PS00216">
    <property type="entry name" value="SUGAR_TRANSPORT_1"/>
    <property type="match status" value="1"/>
</dbReference>
<dbReference type="PROSITE" id="PS00217">
    <property type="entry name" value="SUGAR_TRANSPORT_2"/>
    <property type="match status" value="1"/>
</dbReference>
<organism>
    <name type="scientific">Aspergillus fumigatus (strain ATCC MYA-4609 / CBS 101355 / FGSC A1100 / Af293)</name>
    <name type="common">Neosartorya fumigata</name>
    <dbReference type="NCBI Taxonomy" id="330879"/>
    <lineage>
        <taxon>Eukaryota</taxon>
        <taxon>Fungi</taxon>
        <taxon>Dikarya</taxon>
        <taxon>Ascomycota</taxon>
        <taxon>Pezizomycotina</taxon>
        <taxon>Eurotiomycetes</taxon>
        <taxon>Eurotiomycetidae</taxon>
        <taxon>Eurotiales</taxon>
        <taxon>Aspergillaceae</taxon>
        <taxon>Aspergillus</taxon>
        <taxon>Aspergillus subgen. Fumigati</taxon>
    </lineage>
</organism>
<gene>
    <name type="primary">qutD</name>
    <name type="ORF">AfA5A2.030c</name>
    <name type="ORF">AFUA_1G11580</name>
</gene>
<reference key="1">
    <citation type="journal article" date="2004" name="Fungal Genet. Biol.">
        <title>Insight into the genome of Aspergillus fumigatus: analysis of a 922 kb region encompassing the nitrate assimilation gene cluster.</title>
        <authorList>
            <person name="Pain A."/>
            <person name="Woodward J.R."/>
            <person name="Quail M.A."/>
            <person name="Anderson M.J."/>
            <person name="Clark R."/>
            <person name="Collins M."/>
            <person name="Fosker N."/>
            <person name="Fraser A."/>
            <person name="Harris D.E."/>
            <person name="Larke N."/>
            <person name="Murphy L.D."/>
            <person name="Humphray S."/>
            <person name="O'Neil S."/>
            <person name="Pertea M."/>
            <person name="Price C."/>
            <person name="Rabbinowitsch E."/>
            <person name="Rajandream M.A."/>
            <person name="Salzberg S.L."/>
            <person name="Saunders D."/>
            <person name="Seeger K."/>
            <person name="Sharp S."/>
            <person name="Warren T."/>
            <person name="Denning D.W."/>
            <person name="Barrell B.G."/>
            <person name="Hall N."/>
        </authorList>
    </citation>
    <scope>NUCLEOTIDE SEQUENCE [GENOMIC DNA]</scope>
</reference>
<reference key="2">
    <citation type="journal article" date="2005" name="Nature">
        <title>Genomic sequence of the pathogenic and allergenic filamentous fungus Aspergillus fumigatus.</title>
        <authorList>
            <person name="Nierman W.C."/>
            <person name="Pain A."/>
            <person name="Anderson M.J."/>
            <person name="Wortman J.R."/>
            <person name="Kim H.S."/>
            <person name="Arroyo J."/>
            <person name="Berriman M."/>
            <person name="Abe K."/>
            <person name="Archer D.B."/>
            <person name="Bermejo C."/>
            <person name="Bennett J.W."/>
            <person name="Bowyer P."/>
            <person name="Chen D."/>
            <person name="Collins M."/>
            <person name="Coulsen R."/>
            <person name="Davies R."/>
            <person name="Dyer P.S."/>
            <person name="Farman M.L."/>
            <person name="Fedorova N."/>
            <person name="Fedorova N.D."/>
            <person name="Feldblyum T.V."/>
            <person name="Fischer R."/>
            <person name="Fosker N."/>
            <person name="Fraser A."/>
            <person name="Garcia J.L."/>
            <person name="Garcia M.J."/>
            <person name="Goble A."/>
            <person name="Goldman G.H."/>
            <person name="Gomi K."/>
            <person name="Griffith-Jones S."/>
            <person name="Gwilliam R."/>
            <person name="Haas B.J."/>
            <person name="Haas H."/>
            <person name="Harris D.E."/>
            <person name="Horiuchi H."/>
            <person name="Huang J."/>
            <person name="Humphray S."/>
            <person name="Jimenez J."/>
            <person name="Keller N."/>
            <person name="Khouri H."/>
            <person name="Kitamoto K."/>
            <person name="Kobayashi T."/>
            <person name="Konzack S."/>
            <person name="Kulkarni R."/>
            <person name="Kumagai T."/>
            <person name="Lafton A."/>
            <person name="Latge J.-P."/>
            <person name="Li W."/>
            <person name="Lord A."/>
            <person name="Lu C."/>
            <person name="Majoros W.H."/>
            <person name="May G.S."/>
            <person name="Miller B.L."/>
            <person name="Mohamoud Y."/>
            <person name="Molina M."/>
            <person name="Monod M."/>
            <person name="Mouyna I."/>
            <person name="Mulligan S."/>
            <person name="Murphy L.D."/>
            <person name="O'Neil S."/>
            <person name="Paulsen I."/>
            <person name="Penalva M.A."/>
            <person name="Pertea M."/>
            <person name="Price C."/>
            <person name="Pritchard B.L."/>
            <person name="Quail M.A."/>
            <person name="Rabbinowitsch E."/>
            <person name="Rawlins N."/>
            <person name="Rajandream M.A."/>
            <person name="Reichard U."/>
            <person name="Renauld H."/>
            <person name="Robson G.D."/>
            <person name="Rodriguez de Cordoba S."/>
            <person name="Rodriguez-Pena J.M."/>
            <person name="Ronning C.M."/>
            <person name="Rutter S."/>
            <person name="Salzberg S.L."/>
            <person name="Sanchez M."/>
            <person name="Sanchez-Ferrero J.C."/>
            <person name="Saunders D."/>
            <person name="Seeger K."/>
            <person name="Squares R."/>
            <person name="Squares S."/>
            <person name="Takeuchi M."/>
            <person name="Tekaia F."/>
            <person name="Turner G."/>
            <person name="Vazquez de Aldana C.R."/>
            <person name="Weidman J."/>
            <person name="White O."/>
            <person name="Woodward J.R."/>
            <person name="Yu J.-H."/>
            <person name="Fraser C.M."/>
            <person name="Galagan J.E."/>
            <person name="Asai K."/>
            <person name="Machida M."/>
            <person name="Hall N."/>
            <person name="Barrell B.G."/>
            <person name="Denning D.W."/>
        </authorList>
    </citation>
    <scope>NUCLEOTIDE SEQUENCE [LARGE SCALE GENOMIC DNA]</scope>
    <source>
        <strain>ATCC MYA-4609 / CBS 101355 / FGSC A1100 / Af293</strain>
    </source>
</reference>
<keyword id="KW-1003">Cell membrane</keyword>
<keyword id="KW-0472">Membrane</keyword>
<keyword id="KW-0672">Quinate metabolism</keyword>
<keyword id="KW-1185">Reference proteome</keyword>
<keyword id="KW-0812">Transmembrane</keyword>
<keyword id="KW-1133">Transmembrane helix</keyword>
<keyword id="KW-0813">Transport</keyword>
<keyword id="KW-0832">Ubl conjugation</keyword>
<sequence length="542" mass="60159">MSILALVEDRPTPKEVYNWKIYLLAAVASFTSCMIGYDSAFIGTTLALSSFREEFGFSTMSKTAVNLVSANIVSCYQAGAFFGAFFAYPIGHFWGRKWGLLFAGTIFTLGAGLMLGANGDRGLGLLYGGRVLAGLGVGAGSNITPIYISEMAPPSIRGRLVGVYELGWQIGGLVGFWINYGVSETLAPSHKQWIIPFAVQLIPSGLLLIGAVFLKESPRWLFSRGRREDAIKNLCWIRQLPADHIYMIEEIGAVDQALEEQRTTIGLGFWKPFKAAGTNKKVMYRLFLGSMLFFWQNGSGINAINYYSPTVFKSIGLHGANTSMFSTGIFGVVKTVVTFVWLLYLIDRVGRRLLLLIGAAGAAVCLLIVGAYIKIADPASNPTQEMTGGGIAAMFFFYLYTVFYTPSWNGTPWVMNSEMFEPNMRSLAQACAAASNWLWNFLISRFTPQMFAKMEYGVWFFFASLMLLSIVFVFFLVPETKGIPLESMDVLFESKPIWRAHATVLAKLREDEEQFRHDIEESGYSKTGEQQVEHVSEDLPKV</sequence>
<protein>
    <recommendedName>
        <fullName>Probable quinate permease</fullName>
    </recommendedName>
    <alternativeName>
        <fullName>Quinate transporter</fullName>
    </alternativeName>
</protein>
<feature type="chain" id="PRO_0000395715" description="Probable quinate permease">
    <location>
        <begin position="1"/>
        <end position="542"/>
    </location>
</feature>
<feature type="topological domain" description="Cytoplasmic" evidence="2">
    <location>
        <begin position="1"/>
        <end position="22"/>
    </location>
</feature>
<feature type="transmembrane region" description="Helical" evidence="2">
    <location>
        <begin position="23"/>
        <end position="43"/>
    </location>
</feature>
<feature type="topological domain" description="Extracellular" evidence="2">
    <location>
        <begin position="44"/>
        <end position="74"/>
    </location>
</feature>
<feature type="transmembrane region" description="Helical" evidence="2">
    <location>
        <begin position="75"/>
        <end position="95"/>
    </location>
</feature>
<feature type="topological domain" description="Cytoplasmic" evidence="2">
    <location>
        <begin position="96"/>
        <end position="97"/>
    </location>
</feature>
<feature type="transmembrane region" description="Helical" evidence="2">
    <location>
        <begin position="98"/>
        <end position="118"/>
    </location>
</feature>
<feature type="topological domain" description="Extracellular" evidence="2">
    <location>
        <begin position="119"/>
        <end position="130"/>
    </location>
</feature>
<feature type="transmembrane region" description="Helical" evidence="2">
    <location>
        <begin position="131"/>
        <end position="151"/>
    </location>
</feature>
<feature type="topological domain" description="Cytoplasmic" evidence="2">
    <location>
        <begin position="152"/>
        <end position="159"/>
    </location>
</feature>
<feature type="transmembrane region" description="Helical" evidence="2">
    <location>
        <begin position="160"/>
        <end position="180"/>
    </location>
</feature>
<feature type="topological domain" description="Extracellular" evidence="2">
    <location>
        <begin position="181"/>
        <end position="193"/>
    </location>
</feature>
<feature type="transmembrane region" description="Helical" evidence="2">
    <location>
        <begin position="194"/>
        <end position="214"/>
    </location>
</feature>
<feature type="topological domain" description="Cytoplasmic" evidence="2">
    <location>
        <begin position="215"/>
        <end position="285"/>
    </location>
</feature>
<feature type="transmembrane region" description="Helical" evidence="2">
    <location>
        <begin position="286"/>
        <end position="306"/>
    </location>
</feature>
<feature type="topological domain" description="Extracellular" evidence="2">
    <location>
        <begin position="307"/>
        <end position="325"/>
    </location>
</feature>
<feature type="transmembrane region" description="Helical" evidence="2">
    <location>
        <begin position="326"/>
        <end position="346"/>
    </location>
</feature>
<feature type="topological domain" description="Cytoplasmic" evidence="2">
    <location>
        <begin position="347"/>
        <end position="352"/>
    </location>
</feature>
<feature type="transmembrane region" description="Helical" evidence="2">
    <location>
        <begin position="353"/>
        <end position="373"/>
    </location>
</feature>
<feature type="topological domain" description="Extracellular" evidence="2">
    <location>
        <begin position="374"/>
        <end position="387"/>
    </location>
</feature>
<feature type="transmembrane region" description="Helical" evidence="2">
    <location>
        <begin position="388"/>
        <end position="408"/>
    </location>
</feature>
<feature type="topological domain" description="Cytoplasmic" evidence="2">
    <location>
        <begin position="409"/>
        <end position="456"/>
    </location>
</feature>
<feature type="transmembrane region" description="Helical" evidence="2">
    <location>
        <begin position="457"/>
        <end position="477"/>
    </location>
</feature>
<feature type="topological domain" description="Extracellular" evidence="2">
    <location>
        <begin position="478"/>
        <end position="542"/>
    </location>
</feature>
<feature type="region of interest" description="Disordered" evidence="3">
    <location>
        <begin position="523"/>
        <end position="542"/>
    </location>
</feature>
<feature type="compositionally biased region" description="Basic and acidic residues" evidence="3">
    <location>
        <begin position="531"/>
        <end position="542"/>
    </location>
</feature>
<evidence type="ECO:0000250" key="1"/>
<evidence type="ECO:0000255" key="2"/>
<evidence type="ECO:0000256" key="3">
    <source>
        <dbReference type="SAM" id="MobiDB-lite"/>
    </source>
</evidence>
<evidence type="ECO:0000305" key="4"/>
<accession>Q6MYX6</accession>
<accession>Q4WSU6</accession>
<proteinExistence type="inferred from homology"/>